<accession>Q058E6</accession>
<sequence>MKDILKLFKKNKKVEEFDSIKISLASPEVIRSWSFGEVKKPETINYRTLNPERDGLFCARIFGPIKDYECLCGKYKRLKHRGVICEKCGVEVTQSKVRRDRMGHIELAAPIAHIWFLKSLPSRIGLLLDMPLRDIERVLYFESYVITDPGITNLEKYQVLSEDQYIQALEENEDEFEAKMGAEAIQNLLKNMDLKKTCKILKKEVLKVNSETKRKKVTKRIKLIESLLTSKNKPEWMILTVLPILPPDLRPLVPLDGGRFATSDLNDLYRRVINRNNRLKRLLELFAPEIIVRNEKRMLQEAIDALLDNGRRGRSITGSNKRPLKSLADMIKGKQGRFRQNLLGKRVDYSGRSVITVGPYLHLNQCGIPKKMALELFKPFIYGKLEQRNLATTIKSAKKMVEKEEPIVWDILDEVIHKHPILLNRAPTLHRLGIQAFEPILIEGKAIQLHPLVCAAYNADFDGDQMAIHIPLTKTAQKEACSLMMSTKNILSPANGEPIIVPSQDVVLGIYYMTRKKINGKGENMLLSSPKEAEYMYSLGAVDLHSIVKIRILEYKKDEKKNLTEKKKIIKTTIGRAILWIHVPMGLPFKIFNKTLRKSHISEILNTCYRLLGLKKTVRLADQMMYIGFSYAAKSGVSVGINDIIIPKEKEKIIFQAEKEVLEIDKQFQTGLVTSSERYNKVIDIWAIANENIADAMMKNLSYEIIFQKNKKKITQKSFNNIFIMADSGARGSAAQIRQLAGMRGLMAKPDGSIIETPITANFREGLNVLQYFISTHGARKGLADTALKTANSGYLTRRLVDVAQDLVITQTNCKTKKGILMNSLIEGGDIKETLKERVLGRITVENIYHLNSKNIIIPKNTLLNEKWCNILEKNFIDSIIVRSVVHCETSFGVCAYCYGRDLARGKIVKKGEAVGVIAAQSIGEPGTQLTMRTFHIGGAASKVASESSIQIRKNGIIHLNQAKSVINSNGKIVIISRNVELKMLDKTGKTQESYKIPYGSILTKGEGQKVKAGEIIAKWDPHTIPVITEVNGYIKFIDMVDGKSITKQNDELTGLSSIVVLDISERNILGKDLKPALKIIGKNEEDIFIPGTDMPAQYFLPGKSIILLEDGMKISSGDILARVPQESVGTKDITGGLPRVADLFEARKPKELAILAEINGIVSFGKETKGKRRLILTPIDGNNIYEEMIPKWRQLNVFEGERVEKGDIISDGPESPHDILRLRGVQAVTNYIVNEVQEVYRLQGVKINDKHIEVIIRQMLRKATIINPGDSNFLQGEQIEYSKITSENKKLKKNKKETATFSRDLLGITKASLATESFISAASFQETTRVLTEAAVAGKKDKLRGLKENVIVGRLIPAGTGYKYHKKRLKNRIKNSVNKKNNMSSISVEEAAANLSELLNSTENINNRI</sequence>
<protein>
    <recommendedName>
        <fullName evidence="1">DNA-directed RNA polymerase subunit beta'</fullName>
        <shortName evidence="1">RNAP subunit beta'</shortName>
        <ecNumber evidence="1">2.7.7.6</ecNumber>
    </recommendedName>
    <alternativeName>
        <fullName evidence="1">RNA polymerase subunit beta'</fullName>
    </alternativeName>
    <alternativeName>
        <fullName evidence="1">Transcriptase subunit beta'</fullName>
    </alternativeName>
</protein>
<reference key="1">
    <citation type="journal article" date="2006" name="Science">
        <title>A small microbial genome: the end of a long symbiotic relationship?</title>
        <authorList>
            <person name="Perez-Brocal V."/>
            <person name="Gil R."/>
            <person name="Ramos S."/>
            <person name="Lamelas A."/>
            <person name="Postigo M."/>
            <person name="Michelena J.M."/>
            <person name="Silva F.J."/>
            <person name="Moya A."/>
            <person name="Latorre A."/>
        </authorList>
    </citation>
    <scope>NUCLEOTIDE SEQUENCE [LARGE SCALE GENOMIC DNA]</scope>
    <source>
        <strain>Cc</strain>
    </source>
</reference>
<keyword id="KW-0240">DNA-directed RNA polymerase</keyword>
<keyword id="KW-0460">Magnesium</keyword>
<keyword id="KW-0479">Metal-binding</keyword>
<keyword id="KW-0548">Nucleotidyltransferase</keyword>
<keyword id="KW-1185">Reference proteome</keyword>
<keyword id="KW-0804">Transcription</keyword>
<keyword id="KW-0808">Transferase</keyword>
<keyword id="KW-0862">Zinc</keyword>
<feature type="chain" id="PRO_0000308823" description="DNA-directed RNA polymerase subunit beta'">
    <location>
        <begin position="1"/>
        <end position="1410"/>
    </location>
</feature>
<feature type="binding site" evidence="1">
    <location>
        <position position="70"/>
    </location>
    <ligand>
        <name>Zn(2+)</name>
        <dbReference type="ChEBI" id="CHEBI:29105"/>
        <label>1</label>
    </ligand>
</feature>
<feature type="binding site" evidence="1">
    <location>
        <position position="72"/>
    </location>
    <ligand>
        <name>Zn(2+)</name>
        <dbReference type="ChEBI" id="CHEBI:29105"/>
        <label>1</label>
    </ligand>
</feature>
<feature type="binding site" evidence="1">
    <location>
        <position position="85"/>
    </location>
    <ligand>
        <name>Zn(2+)</name>
        <dbReference type="ChEBI" id="CHEBI:29105"/>
        <label>1</label>
    </ligand>
</feature>
<feature type="binding site" evidence="1">
    <location>
        <position position="88"/>
    </location>
    <ligand>
        <name>Zn(2+)</name>
        <dbReference type="ChEBI" id="CHEBI:29105"/>
        <label>1</label>
    </ligand>
</feature>
<feature type="binding site" evidence="1">
    <location>
        <position position="460"/>
    </location>
    <ligand>
        <name>Mg(2+)</name>
        <dbReference type="ChEBI" id="CHEBI:18420"/>
    </ligand>
</feature>
<feature type="binding site" evidence="1">
    <location>
        <position position="462"/>
    </location>
    <ligand>
        <name>Mg(2+)</name>
        <dbReference type="ChEBI" id="CHEBI:18420"/>
    </ligand>
</feature>
<feature type="binding site" evidence="1">
    <location>
        <position position="464"/>
    </location>
    <ligand>
        <name>Mg(2+)</name>
        <dbReference type="ChEBI" id="CHEBI:18420"/>
    </ligand>
</feature>
<feature type="binding site" evidence="1">
    <location>
        <position position="814"/>
    </location>
    <ligand>
        <name>Zn(2+)</name>
        <dbReference type="ChEBI" id="CHEBI:29105"/>
        <label>2</label>
    </ligand>
</feature>
<feature type="binding site" evidence="1">
    <location>
        <position position="888"/>
    </location>
    <ligand>
        <name>Zn(2+)</name>
        <dbReference type="ChEBI" id="CHEBI:29105"/>
        <label>2</label>
    </ligand>
</feature>
<feature type="binding site" evidence="1">
    <location>
        <position position="895"/>
    </location>
    <ligand>
        <name>Zn(2+)</name>
        <dbReference type="ChEBI" id="CHEBI:29105"/>
        <label>2</label>
    </ligand>
</feature>
<feature type="binding site" evidence="1">
    <location>
        <position position="898"/>
    </location>
    <ligand>
        <name>Zn(2+)</name>
        <dbReference type="ChEBI" id="CHEBI:29105"/>
        <label>2</label>
    </ligand>
</feature>
<comment type="function">
    <text evidence="1">DNA-dependent RNA polymerase catalyzes the transcription of DNA into RNA using the four ribonucleoside triphosphates as substrates.</text>
</comment>
<comment type="catalytic activity">
    <reaction evidence="1">
        <text>RNA(n) + a ribonucleoside 5'-triphosphate = RNA(n+1) + diphosphate</text>
        <dbReference type="Rhea" id="RHEA:21248"/>
        <dbReference type="Rhea" id="RHEA-COMP:14527"/>
        <dbReference type="Rhea" id="RHEA-COMP:17342"/>
        <dbReference type="ChEBI" id="CHEBI:33019"/>
        <dbReference type="ChEBI" id="CHEBI:61557"/>
        <dbReference type="ChEBI" id="CHEBI:140395"/>
        <dbReference type="EC" id="2.7.7.6"/>
    </reaction>
</comment>
<comment type="cofactor">
    <cofactor evidence="1">
        <name>Mg(2+)</name>
        <dbReference type="ChEBI" id="CHEBI:18420"/>
    </cofactor>
    <text evidence="1">Binds 1 Mg(2+) ion per subunit.</text>
</comment>
<comment type="cofactor">
    <cofactor evidence="1">
        <name>Zn(2+)</name>
        <dbReference type="ChEBI" id="CHEBI:29105"/>
    </cofactor>
    <text evidence="1">Binds 2 Zn(2+) ions per subunit.</text>
</comment>
<comment type="subunit">
    <text evidence="1">The RNAP catalytic core consists of 2 alpha, 1 beta, 1 beta' and 1 omega subunit. When a sigma factor is associated with the core the holoenzyme is formed, which can initiate transcription.</text>
</comment>
<comment type="similarity">
    <text evidence="1">Belongs to the RNA polymerase beta' chain family.</text>
</comment>
<gene>
    <name evidence="1" type="primary">rpoC</name>
    <name type="ordered locus">BCc_018</name>
</gene>
<proteinExistence type="inferred from homology"/>
<evidence type="ECO:0000255" key="1">
    <source>
        <dbReference type="HAMAP-Rule" id="MF_01322"/>
    </source>
</evidence>
<name>RPOC_BUCCC</name>
<organism>
    <name type="scientific">Buchnera aphidicola subsp. Cinara cedri (strain Cc)</name>
    <dbReference type="NCBI Taxonomy" id="372461"/>
    <lineage>
        <taxon>Bacteria</taxon>
        <taxon>Pseudomonadati</taxon>
        <taxon>Pseudomonadota</taxon>
        <taxon>Gammaproteobacteria</taxon>
        <taxon>Enterobacterales</taxon>
        <taxon>Erwiniaceae</taxon>
        <taxon>Buchnera</taxon>
    </lineage>
</organism>
<dbReference type="EC" id="2.7.7.6" evidence="1"/>
<dbReference type="EMBL" id="CP000263">
    <property type="protein sequence ID" value="ABJ90503.1"/>
    <property type="molecule type" value="Genomic_DNA"/>
</dbReference>
<dbReference type="RefSeq" id="WP_011672422.1">
    <property type="nucleotide sequence ID" value="NC_008513.1"/>
</dbReference>
<dbReference type="SMR" id="Q058E6"/>
<dbReference type="STRING" id="372461.BCc_018"/>
<dbReference type="KEGG" id="bcc:BCc_018"/>
<dbReference type="eggNOG" id="COG0086">
    <property type="taxonomic scope" value="Bacteria"/>
</dbReference>
<dbReference type="HOGENOM" id="CLU_000524_3_1_6"/>
<dbReference type="OrthoDB" id="9815296at2"/>
<dbReference type="Proteomes" id="UP000000669">
    <property type="component" value="Chromosome"/>
</dbReference>
<dbReference type="GO" id="GO:0000428">
    <property type="term" value="C:DNA-directed RNA polymerase complex"/>
    <property type="evidence" value="ECO:0007669"/>
    <property type="project" value="UniProtKB-KW"/>
</dbReference>
<dbReference type="GO" id="GO:0003677">
    <property type="term" value="F:DNA binding"/>
    <property type="evidence" value="ECO:0007669"/>
    <property type="project" value="UniProtKB-UniRule"/>
</dbReference>
<dbReference type="GO" id="GO:0003899">
    <property type="term" value="F:DNA-directed RNA polymerase activity"/>
    <property type="evidence" value="ECO:0007669"/>
    <property type="project" value="UniProtKB-UniRule"/>
</dbReference>
<dbReference type="GO" id="GO:0000287">
    <property type="term" value="F:magnesium ion binding"/>
    <property type="evidence" value="ECO:0007669"/>
    <property type="project" value="UniProtKB-UniRule"/>
</dbReference>
<dbReference type="GO" id="GO:0008270">
    <property type="term" value="F:zinc ion binding"/>
    <property type="evidence" value="ECO:0007669"/>
    <property type="project" value="UniProtKB-UniRule"/>
</dbReference>
<dbReference type="GO" id="GO:0006351">
    <property type="term" value="P:DNA-templated transcription"/>
    <property type="evidence" value="ECO:0007669"/>
    <property type="project" value="UniProtKB-UniRule"/>
</dbReference>
<dbReference type="CDD" id="cd02655">
    <property type="entry name" value="RNAP_beta'_C"/>
    <property type="match status" value="1"/>
</dbReference>
<dbReference type="CDD" id="cd01609">
    <property type="entry name" value="RNAP_beta'_N"/>
    <property type="match status" value="1"/>
</dbReference>
<dbReference type="FunFam" id="1.10.132.30:FF:000003">
    <property type="entry name" value="DNA-directed RNA polymerase subunit beta"/>
    <property type="match status" value="1"/>
</dbReference>
<dbReference type="FunFam" id="1.10.150.390:FF:000002">
    <property type="entry name" value="DNA-directed RNA polymerase subunit beta"/>
    <property type="match status" value="1"/>
</dbReference>
<dbReference type="FunFam" id="1.10.40.90:FF:000001">
    <property type="entry name" value="DNA-directed RNA polymerase subunit beta"/>
    <property type="match status" value="1"/>
</dbReference>
<dbReference type="FunFam" id="4.10.860.120:FF:000001">
    <property type="entry name" value="DNA-directed RNA polymerase subunit beta"/>
    <property type="match status" value="1"/>
</dbReference>
<dbReference type="Gene3D" id="1.10.132.30">
    <property type="match status" value="1"/>
</dbReference>
<dbReference type="Gene3D" id="1.10.150.390">
    <property type="match status" value="1"/>
</dbReference>
<dbReference type="Gene3D" id="1.10.1790.20">
    <property type="match status" value="1"/>
</dbReference>
<dbReference type="Gene3D" id="1.10.40.90">
    <property type="match status" value="1"/>
</dbReference>
<dbReference type="Gene3D" id="2.40.40.20">
    <property type="match status" value="1"/>
</dbReference>
<dbReference type="Gene3D" id="2.40.50.100">
    <property type="match status" value="3"/>
</dbReference>
<dbReference type="Gene3D" id="4.10.860.120">
    <property type="entry name" value="RNA polymerase II, clamp domain"/>
    <property type="match status" value="1"/>
</dbReference>
<dbReference type="Gene3D" id="1.10.274.100">
    <property type="entry name" value="RNA polymerase Rpb1, domain 3"/>
    <property type="match status" value="1"/>
</dbReference>
<dbReference type="HAMAP" id="MF_01322">
    <property type="entry name" value="RNApol_bact_RpoC"/>
    <property type="match status" value="1"/>
</dbReference>
<dbReference type="InterPro" id="IPR045867">
    <property type="entry name" value="DNA-dir_RpoC_beta_prime"/>
</dbReference>
<dbReference type="InterPro" id="IPR012754">
    <property type="entry name" value="DNA-dir_RpoC_beta_prime_bact"/>
</dbReference>
<dbReference type="InterPro" id="IPR000722">
    <property type="entry name" value="RNA_pol_asu"/>
</dbReference>
<dbReference type="InterPro" id="IPR006592">
    <property type="entry name" value="RNA_pol_N"/>
</dbReference>
<dbReference type="InterPro" id="IPR007080">
    <property type="entry name" value="RNA_pol_Rpb1_1"/>
</dbReference>
<dbReference type="InterPro" id="IPR007066">
    <property type="entry name" value="RNA_pol_Rpb1_3"/>
</dbReference>
<dbReference type="InterPro" id="IPR042102">
    <property type="entry name" value="RNA_pol_Rpb1_3_sf"/>
</dbReference>
<dbReference type="InterPro" id="IPR007083">
    <property type="entry name" value="RNA_pol_Rpb1_4"/>
</dbReference>
<dbReference type="InterPro" id="IPR007081">
    <property type="entry name" value="RNA_pol_Rpb1_5"/>
</dbReference>
<dbReference type="InterPro" id="IPR044893">
    <property type="entry name" value="RNA_pol_Rpb1_clamp_domain"/>
</dbReference>
<dbReference type="InterPro" id="IPR038120">
    <property type="entry name" value="Rpb1_funnel_sf"/>
</dbReference>
<dbReference type="NCBIfam" id="TIGR02386">
    <property type="entry name" value="rpoC_TIGR"/>
    <property type="match status" value="1"/>
</dbReference>
<dbReference type="PANTHER" id="PTHR19376">
    <property type="entry name" value="DNA-DIRECTED RNA POLYMERASE"/>
    <property type="match status" value="1"/>
</dbReference>
<dbReference type="PANTHER" id="PTHR19376:SF54">
    <property type="entry name" value="DNA-DIRECTED RNA POLYMERASE SUBUNIT BETA"/>
    <property type="match status" value="1"/>
</dbReference>
<dbReference type="Pfam" id="PF04997">
    <property type="entry name" value="RNA_pol_Rpb1_1"/>
    <property type="match status" value="1"/>
</dbReference>
<dbReference type="Pfam" id="PF00623">
    <property type="entry name" value="RNA_pol_Rpb1_2"/>
    <property type="match status" value="2"/>
</dbReference>
<dbReference type="Pfam" id="PF04983">
    <property type="entry name" value="RNA_pol_Rpb1_3"/>
    <property type="match status" value="1"/>
</dbReference>
<dbReference type="Pfam" id="PF05000">
    <property type="entry name" value="RNA_pol_Rpb1_4"/>
    <property type="match status" value="1"/>
</dbReference>
<dbReference type="Pfam" id="PF04998">
    <property type="entry name" value="RNA_pol_Rpb1_5"/>
    <property type="match status" value="1"/>
</dbReference>
<dbReference type="SMART" id="SM00663">
    <property type="entry name" value="RPOLA_N"/>
    <property type="match status" value="1"/>
</dbReference>
<dbReference type="SUPFAM" id="SSF64484">
    <property type="entry name" value="beta and beta-prime subunits of DNA dependent RNA-polymerase"/>
    <property type="match status" value="1"/>
</dbReference>